<organism>
    <name type="scientific">Arthroderma benhamiae (strain ATCC MYA-4681 / CBS 112371)</name>
    <name type="common">Trichophyton mentagrophytes</name>
    <dbReference type="NCBI Taxonomy" id="663331"/>
    <lineage>
        <taxon>Eukaryota</taxon>
        <taxon>Fungi</taxon>
        <taxon>Dikarya</taxon>
        <taxon>Ascomycota</taxon>
        <taxon>Pezizomycotina</taxon>
        <taxon>Eurotiomycetes</taxon>
        <taxon>Eurotiomycetidae</taxon>
        <taxon>Onygenales</taxon>
        <taxon>Arthrodermataceae</taxon>
        <taxon>Trichophyton</taxon>
    </lineage>
</organism>
<proteinExistence type="inferred from homology"/>
<feature type="signal peptide" evidence="2">
    <location>
        <begin position="1"/>
        <end position="20"/>
    </location>
</feature>
<feature type="chain" id="PRO_0000411210" description="Putative dipeptidase ARB_02715">
    <location>
        <begin position="21"/>
        <end position="414"/>
    </location>
</feature>
<feature type="binding site" evidence="3">
    <location>
        <position position="45"/>
    </location>
    <ligand>
        <name>Zn(2+)</name>
        <dbReference type="ChEBI" id="CHEBI:29105"/>
        <label>1</label>
        <note>catalytic</note>
    </ligand>
</feature>
<feature type="binding site" evidence="3">
    <location>
        <position position="47"/>
    </location>
    <ligand>
        <name>Zn(2+)</name>
        <dbReference type="ChEBI" id="CHEBI:29105"/>
        <label>1</label>
        <note>catalytic</note>
    </ligand>
</feature>
<feature type="binding site" evidence="3">
    <location>
        <position position="157"/>
    </location>
    <ligand>
        <name>Zn(2+)</name>
        <dbReference type="ChEBI" id="CHEBI:29105"/>
        <label>1</label>
        <note>catalytic</note>
    </ligand>
</feature>
<feature type="binding site" evidence="3">
    <location>
        <position position="157"/>
    </location>
    <ligand>
        <name>Zn(2+)</name>
        <dbReference type="ChEBI" id="CHEBI:29105"/>
        <label>2</label>
        <note>catalytic</note>
    </ligand>
</feature>
<feature type="binding site" evidence="3">
    <location>
        <position position="184"/>
    </location>
    <ligand>
        <name>substrate</name>
    </ligand>
</feature>
<feature type="binding site" evidence="3">
    <location>
        <position position="228"/>
    </location>
    <ligand>
        <name>Zn(2+)</name>
        <dbReference type="ChEBI" id="CHEBI:29105"/>
        <label>2</label>
        <note>catalytic</note>
    </ligand>
</feature>
<feature type="binding site" evidence="3">
    <location>
        <position position="249"/>
    </location>
    <ligand>
        <name>Zn(2+)</name>
        <dbReference type="ChEBI" id="CHEBI:29105"/>
        <label>2</label>
        <note>catalytic</note>
    </ligand>
</feature>
<feature type="binding site" evidence="3">
    <location>
        <position position="260"/>
    </location>
    <ligand>
        <name>substrate</name>
    </ligand>
</feature>
<feature type="binding site" evidence="3">
    <location>
        <position position="320"/>
    </location>
    <ligand>
        <name>substrate</name>
    </ligand>
</feature>
<feature type="glycosylation site" description="N-linked (GlcNAc...) asparagine" evidence="2">
    <location>
        <position position="392"/>
    </location>
</feature>
<feature type="disulfide bond" evidence="3">
    <location>
        <begin position="96"/>
        <end position="186"/>
    </location>
</feature>
<gene>
    <name type="ORF">ARB_02715</name>
</gene>
<protein>
    <recommendedName>
        <fullName>Putative dipeptidase ARB_02715</fullName>
        <ecNumber evidence="3">3.4.13.19</ecNumber>
    </recommendedName>
</protein>
<evidence type="ECO:0000250" key="1"/>
<evidence type="ECO:0000255" key="2"/>
<evidence type="ECO:0000255" key="3">
    <source>
        <dbReference type="PROSITE-ProRule" id="PRU10073"/>
    </source>
</evidence>
<sequence>MAALFVSLLALTSLVPVQGAATVPQTDYAKRAERVLRSAPLIDGHNDLPYAIRRSTNDQIYDGKLPFETSLKGHTDLPRMRKGRMGGQFWSVFIACPSDPNAPINTPKFATRDTLEQIDVARRLVDKYSKDLMYCDNPGCAKRAFREGKIGSFIGIEGGHQVGSSIAALRQAFYAGARYMTLTHNCDNAWATAASTVRAGKPDLGMTDFGPALIKEMNRLGMLVDLSHVSHQTMRDVLKITKAPVIFSHSSAYEVSKHLRNVPDDVLKTVAKNNGVVMVTFVSSFVKVDDPDSADVNTVVKHIFHIAEVAGWDHVGLGGDYDGTTELPKGLEDVSKYPYLIEKVLEAGATEEQARKLVGENVLRVWTEVEQIAKKIQRSGVLPVEEVWKGRNGTALSERSTFIEGPAPLEYGCD</sequence>
<keyword id="KW-0224">Dipeptidase</keyword>
<keyword id="KW-1015">Disulfide bond</keyword>
<keyword id="KW-0325">Glycoprotein</keyword>
<keyword id="KW-0378">Hydrolase</keyword>
<keyword id="KW-0479">Metal-binding</keyword>
<keyword id="KW-0482">Metalloprotease</keyword>
<keyword id="KW-0645">Protease</keyword>
<keyword id="KW-1185">Reference proteome</keyword>
<keyword id="KW-0732">Signal</keyword>
<keyword id="KW-0862">Zinc</keyword>
<comment type="function">
    <text evidence="1">Hydrolyzes a wide range of dipeptides.</text>
</comment>
<comment type="catalytic activity">
    <reaction evidence="3">
        <text>an L-aminoacyl-L-amino acid + H2O = 2 an L-alpha-amino acid</text>
        <dbReference type="Rhea" id="RHEA:48940"/>
        <dbReference type="ChEBI" id="CHEBI:15377"/>
        <dbReference type="ChEBI" id="CHEBI:59869"/>
        <dbReference type="ChEBI" id="CHEBI:77460"/>
        <dbReference type="EC" id="3.4.13.19"/>
    </reaction>
</comment>
<comment type="cofactor">
    <cofactor evidence="3">
        <name>Zn(2+)</name>
        <dbReference type="ChEBI" id="CHEBI:29105"/>
    </cofactor>
</comment>
<comment type="similarity">
    <text evidence="3">Belongs to the metallo-dependent hydrolases superfamily. Peptidase M19 family.</text>
</comment>
<name>DPEP1_ARTBC</name>
<reference key="1">
    <citation type="journal article" date="2011" name="Genome Biol.">
        <title>Comparative and functional genomics provide insights into the pathogenicity of dermatophytic fungi.</title>
        <authorList>
            <person name="Burmester A."/>
            <person name="Shelest E."/>
            <person name="Gloeckner G."/>
            <person name="Heddergott C."/>
            <person name="Schindler S."/>
            <person name="Staib P."/>
            <person name="Heidel A."/>
            <person name="Felder M."/>
            <person name="Petzold A."/>
            <person name="Szafranski K."/>
            <person name="Feuermann M."/>
            <person name="Pedruzzi I."/>
            <person name="Priebe S."/>
            <person name="Groth M."/>
            <person name="Winkler R."/>
            <person name="Li W."/>
            <person name="Kniemeyer O."/>
            <person name="Schroeckh V."/>
            <person name="Hertweck C."/>
            <person name="Hube B."/>
            <person name="White T.C."/>
            <person name="Platzer M."/>
            <person name="Guthke R."/>
            <person name="Heitman J."/>
            <person name="Woestemeyer J."/>
            <person name="Zipfel P.F."/>
            <person name="Monod M."/>
            <person name="Brakhage A.A."/>
        </authorList>
    </citation>
    <scope>NUCLEOTIDE SEQUENCE [LARGE SCALE GENOMIC DNA]</scope>
    <source>
        <strain>ATCC MYA-4681 / CBS 112371</strain>
    </source>
</reference>
<dbReference type="EC" id="3.4.13.19" evidence="3"/>
<dbReference type="EMBL" id="ABSU01000030">
    <property type="protein sequence ID" value="EFE30343.1"/>
    <property type="molecule type" value="Genomic_DNA"/>
</dbReference>
<dbReference type="RefSeq" id="XP_003010983.1">
    <property type="nucleotide sequence ID" value="XM_003010937.1"/>
</dbReference>
<dbReference type="SMR" id="D4B2N2"/>
<dbReference type="GeneID" id="9525100"/>
<dbReference type="KEGG" id="abe:ARB_02715"/>
<dbReference type="eggNOG" id="KOG4127">
    <property type="taxonomic scope" value="Eukaryota"/>
</dbReference>
<dbReference type="HOGENOM" id="CLU_031404_4_2_1"/>
<dbReference type="OMA" id="WSGNVLR"/>
<dbReference type="Proteomes" id="UP000008866">
    <property type="component" value="Unassembled WGS sequence"/>
</dbReference>
<dbReference type="GO" id="GO:0046872">
    <property type="term" value="F:metal ion binding"/>
    <property type="evidence" value="ECO:0007669"/>
    <property type="project" value="UniProtKB-KW"/>
</dbReference>
<dbReference type="GO" id="GO:0070573">
    <property type="term" value="F:metallodipeptidase activity"/>
    <property type="evidence" value="ECO:0007669"/>
    <property type="project" value="InterPro"/>
</dbReference>
<dbReference type="GO" id="GO:0006508">
    <property type="term" value="P:proteolysis"/>
    <property type="evidence" value="ECO:0007669"/>
    <property type="project" value="UniProtKB-KW"/>
</dbReference>
<dbReference type="CDD" id="cd01301">
    <property type="entry name" value="rDP_like"/>
    <property type="match status" value="1"/>
</dbReference>
<dbReference type="Gene3D" id="3.20.20.140">
    <property type="entry name" value="Metal-dependent hydrolases"/>
    <property type="match status" value="1"/>
</dbReference>
<dbReference type="InterPro" id="IPR032466">
    <property type="entry name" value="Metal_Hydrolase"/>
</dbReference>
<dbReference type="InterPro" id="IPR008257">
    <property type="entry name" value="Pept_M19"/>
</dbReference>
<dbReference type="PANTHER" id="PTHR10443:SF12">
    <property type="entry name" value="DIPEPTIDASE"/>
    <property type="match status" value="1"/>
</dbReference>
<dbReference type="PANTHER" id="PTHR10443">
    <property type="entry name" value="MICROSOMAL DIPEPTIDASE"/>
    <property type="match status" value="1"/>
</dbReference>
<dbReference type="Pfam" id="PF01244">
    <property type="entry name" value="Peptidase_M19"/>
    <property type="match status" value="1"/>
</dbReference>
<dbReference type="SUPFAM" id="SSF51556">
    <property type="entry name" value="Metallo-dependent hydrolases"/>
    <property type="match status" value="1"/>
</dbReference>
<dbReference type="PROSITE" id="PS51365">
    <property type="entry name" value="RENAL_DIPEPTIDASE_2"/>
    <property type="match status" value="1"/>
</dbReference>
<accession>D4B2N2</accession>